<comment type="similarity">
    <text evidence="1">Belongs to the universal ribosomal protein uS9 family.</text>
</comment>
<evidence type="ECO:0000255" key="1">
    <source>
        <dbReference type="HAMAP-Rule" id="MF_00532"/>
    </source>
</evidence>
<evidence type="ECO:0000305" key="2"/>
<feature type="chain" id="PRO_0000411541" description="Small ribosomal subunit protein uS9">
    <location>
        <begin position="1"/>
        <end position="130"/>
    </location>
</feature>
<keyword id="KW-0687">Ribonucleoprotein</keyword>
<keyword id="KW-0689">Ribosomal protein</keyword>
<gene>
    <name evidence="1" type="primary">rpsI</name>
    <name evidence="1" type="synonym">rps9</name>
    <name type="ordered locus">SPs1664</name>
</gene>
<reference key="1">
    <citation type="journal article" date="2003" name="Genome Res.">
        <title>Genome sequence of an M3 strain of Streptococcus pyogenes reveals a large-scale genomic rearrangement in invasive strains and new insights into phage evolution.</title>
        <authorList>
            <person name="Nakagawa I."/>
            <person name="Kurokawa K."/>
            <person name="Yamashita A."/>
            <person name="Nakata M."/>
            <person name="Tomiyasu Y."/>
            <person name="Okahashi N."/>
            <person name="Kawabata S."/>
            <person name="Yamazaki K."/>
            <person name="Shiba T."/>
            <person name="Yasunaga T."/>
            <person name="Hayashi H."/>
            <person name="Hattori M."/>
            <person name="Hamada S."/>
        </authorList>
    </citation>
    <scope>NUCLEOTIDE SEQUENCE [LARGE SCALE GENOMIC DNA]</scope>
    <source>
        <strain>SSI-1</strain>
    </source>
</reference>
<accession>P0DF03</accession>
<accession>P66649</accession>
<accession>Q99Y08</accession>
<dbReference type="EMBL" id="BA000034">
    <property type="protein sequence ID" value="BAC64759.1"/>
    <property type="molecule type" value="Genomic_DNA"/>
</dbReference>
<dbReference type="RefSeq" id="WP_002982716.1">
    <property type="nucleotide sequence ID" value="NC_004606.1"/>
</dbReference>
<dbReference type="SMR" id="P0DF03"/>
<dbReference type="GeneID" id="83689365"/>
<dbReference type="KEGG" id="sps:SPs1664"/>
<dbReference type="HOGENOM" id="CLU_046483_2_1_9"/>
<dbReference type="GO" id="GO:0022627">
    <property type="term" value="C:cytosolic small ribosomal subunit"/>
    <property type="evidence" value="ECO:0007669"/>
    <property type="project" value="TreeGrafter"/>
</dbReference>
<dbReference type="GO" id="GO:0003723">
    <property type="term" value="F:RNA binding"/>
    <property type="evidence" value="ECO:0007669"/>
    <property type="project" value="TreeGrafter"/>
</dbReference>
<dbReference type="GO" id="GO:0003735">
    <property type="term" value="F:structural constituent of ribosome"/>
    <property type="evidence" value="ECO:0007669"/>
    <property type="project" value="InterPro"/>
</dbReference>
<dbReference type="GO" id="GO:0006412">
    <property type="term" value="P:translation"/>
    <property type="evidence" value="ECO:0007669"/>
    <property type="project" value="UniProtKB-UniRule"/>
</dbReference>
<dbReference type="FunFam" id="3.30.230.10:FF:000001">
    <property type="entry name" value="30S ribosomal protein S9"/>
    <property type="match status" value="1"/>
</dbReference>
<dbReference type="Gene3D" id="3.30.230.10">
    <property type="match status" value="1"/>
</dbReference>
<dbReference type="HAMAP" id="MF_00532_B">
    <property type="entry name" value="Ribosomal_uS9_B"/>
    <property type="match status" value="1"/>
</dbReference>
<dbReference type="InterPro" id="IPR020568">
    <property type="entry name" value="Ribosomal_Su5_D2-typ_SF"/>
</dbReference>
<dbReference type="InterPro" id="IPR000754">
    <property type="entry name" value="Ribosomal_uS9"/>
</dbReference>
<dbReference type="InterPro" id="IPR023035">
    <property type="entry name" value="Ribosomal_uS9_bac/plastid"/>
</dbReference>
<dbReference type="InterPro" id="IPR020574">
    <property type="entry name" value="Ribosomal_uS9_CS"/>
</dbReference>
<dbReference type="InterPro" id="IPR014721">
    <property type="entry name" value="Ribsml_uS5_D2-typ_fold_subgr"/>
</dbReference>
<dbReference type="NCBIfam" id="NF001099">
    <property type="entry name" value="PRK00132.1"/>
    <property type="match status" value="1"/>
</dbReference>
<dbReference type="PANTHER" id="PTHR21569">
    <property type="entry name" value="RIBOSOMAL PROTEIN S9"/>
    <property type="match status" value="1"/>
</dbReference>
<dbReference type="PANTHER" id="PTHR21569:SF1">
    <property type="entry name" value="SMALL RIBOSOMAL SUBUNIT PROTEIN US9M"/>
    <property type="match status" value="1"/>
</dbReference>
<dbReference type="Pfam" id="PF00380">
    <property type="entry name" value="Ribosomal_S9"/>
    <property type="match status" value="1"/>
</dbReference>
<dbReference type="SUPFAM" id="SSF54211">
    <property type="entry name" value="Ribosomal protein S5 domain 2-like"/>
    <property type="match status" value="1"/>
</dbReference>
<dbReference type="PROSITE" id="PS00360">
    <property type="entry name" value="RIBOSOMAL_S9"/>
    <property type="match status" value="1"/>
</dbReference>
<sequence length="130" mass="14235">MAQAQYAGTGRRKNAVARVRLVPGTGKITVNKKDVEEYIPHADLRLIINQPFAVTSTEGSYDVFVNVVGGGYGGQSGAIRHGIARALLQVDPDFRDSLKRAGLLTRDARMVERKKPGLKKARKASQFSKR</sequence>
<organism>
    <name type="scientific">Streptococcus pyogenes serotype M3 (strain SSI-1)</name>
    <dbReference type="NCBI Taxonomy" id="193567"/>
    <lineage>
        <taxon>Bacteria</taxon>
        <taxon>Bacillati</taxon>
        <taxon>Bacillota</taxon>
        <taxon>Bacilli</taxon>
        <taxon>Lactobacillales</taxon>
        <taxon>Streptococcaceae</taxon>
        <taxon>Streptococcus</taxon>
    </lineage>
</organism>
<name>RS9_STRPQ</name>
<protein>
    <recommendedName>
        <fullName evidence="1">Small ribosomal subunit protein uS9</fullName>
    </recommendedName>
    <alternativeName>
        <fullName evidence="2">30S ribosomal protein S9</fullName>
    </alternativeName>
</protein>
<proteinExistence type="inferred from homology"/>